<gene>
    <name evidence="6" type="primary">AHL18</name>
    <name evidence="8" type="ordered locus">At3g60870</name>
    <name evidence="9" type="ORF">T4C21_280</name>
</gene>
<name>AHL18_ARATH</name>
<comment type="function">
    <text evidence="1 4">Transcription factor that specifically binds AT-rich DNA sequences related to the nuclear matrix attachment regions (MARs) (By similarity). Acts redundantly with AHL22, AHL27 and AHL29 in the regulation of flowering and regulation of the hypocotyl elongation (PubMed:19517252).</text>
</comment>
<comment type="subcellular location">
    <subcellularLocation>
        <location evidence="1">Nucleus</location>
    </subcellularLocation>
</comment>
<comment type="domain">
    <text evidence="5">The PPC domain mediates interactions between AHL proteins.</text>
</comment>
<sequence length="265" mass="28412">MDEVSRSHTPQFLSSDHQHYHHQNAGRQKRGREEEGVEPNNIGEDLATFPSGEENIKKRRPRGRPAGSKNKPKAPIIVTRDSANAFRCHVMEITNACDVMESLAVFARRRQRGVCVLTGNGAVTNVTVRQPGGGVVSLHGRFEILSLSGSFLPPPAPPAASGLKVYLAGGQGQVIGGSVVGPLTASSPVVVMAASFGNASYERLPLEEEEETEREIDGNAARAIGTQTQKQLMQDATSFIGSPSNLINSVSLPGEAYWGTQRPSF</sequence>
<accession>Q9LZX7</accession>
<evidence type="ECO:0000250" key="1">
    <source>
        <dbReference type="UniProtKB" id="Q8VYJ2"/>
    </source>
</evidence>
<evidence type="ECO:0000255" key="2">
    <source>
        <dbReference type="PROSITE-ProRule" id="PRU01078"/>
    </source>
</evidence>
<evidence type="ECO:0000256" key="3">
    <source>
        <dbReference type="SAM" id="MobiDB-lite"/>
    </source>
</evidence>
<evidence type="ECO:0000269" key="4">
    <source>
    </source>
</evidence>
<evidence type="ECO:0000269" key="5">
    <source>
    </source>
</evidence>
<evidence type="ECO:0000303" key="6">
    <source>
    </source>
</evidence>
<evidence type="ECO:0000305" key="7"/>
<evidence type="ECO:0000312" key="8">
    <source>
        <dbReference type="Araport" id="AT3G60870"/>
    </source>
</evidence>
<evidence type="ECO:0000312" key="9">
    <source>
        <dbReference type="EMBL" id="CAB82691.1"/>
    </source>
</evidence>
<evidence type="ECO:0000312" key="10">
    <source>
        <dbReference type="EMBL" id="FAA00289.1"/>
    </source>
</evidence>
<protein>
    <recommendedName>
        <fullName evidence="10">AT-hook motif nuclear-localized protein 18</fullName>
    </recommendedName>
</protein>
<keyword id="KW-0238">DNA-binding</keyword>
<keyword id="KW-0287">Flowering</keyword>
<keyword id="KW-0539">Nucleus</keyword>
<keyword id="KW-1185">Reference proteome</keyword>
<keyword id="KW-0804">Transcription</keyword>
<keyword id="KW-0805">Transcription regulation</keyword>
<organism>
    <name type="scientific">Arabidopsis thaliana</name>
    <name type="common">Mouse-ear cress</name>
    <dbReference type="NCBI Taxonomy" id="3702"/>
    <lineage>
        <taxon>Eukaryota</taxon>
        <taxon>Viridiplantae</taxon>
        <taxon>Streptophyta</taxon>
        <taxon>Embryophyta</taxon>
        <taxon>Tracheophyta</taxon>
        <taxon>Spermatophyta</taxon>
        <taxon>Magnoliopsida</taxon>
        <taxon>eudicotyledons</taxon>
        <taxon>Gunneridae</taxon>
        <taxon>Pentapetalae</taxon>
        <taxon>rosids</taxon>
        <taxon>malvids</taxon>
        <taxon>Brassicales</taxon>
        <taxon>Brassicaceae</taxon>
        <taxon>Camelineae</taxon>
        <taxon>Arabidopsis</taxon>
    </lineage>
</organism>
<feature type="chain" id="PRO_0000432036" description="AT-hook motif nuclear-localized protein 18">
    <location>
        <begin position="1"/>
        <end position="265"/>
    </location>
</feature>
<feature type="domain" description="PPC" evidence="2">
    <location>
        <begin position="83"/>
        <end position="217"/>
    </location>
</feature>
<feature type="DNA-binding region" description="A.T hook" evidence="7">
    <location>
        <begin position="59"/>
        <end position="71"/>
    </location>
</feature>
<feature type="region of interest" description="Disordered" evidence="3">
    <location>
        <begin position="1"/>
        <end position="75"/>
    </location>
</feature>
<feature type="compositionally biased region" description="Basic residues" evidence="3">
    <location>
        <begin position="19"/>
        <end position="30"/>
    </location>
</feature>
<dbReference type="EMBL" id="AL162295">
    <property type="protein sequence ID" value="CAB82691.1"/>
    <property type="molecule type" value="Genomic_DNA"/>
</dbReference>
<dbReference type="EMBL" id="CP002686">
    <property type="protein sequence ID" value="AEE80119.1"/>
    <property type="molecule type" value="Genomic_DNA"/>
</dbReference>
<dbReference type="EMBL" id="BR000354">
    <property type="protein sequence ID" value="FAA00289.1"/>
    <property type="molecule type" value="mRNA"/>
</dbReference>
<dbReference type="PIR" id="T47898">
    <property type="entry name" value="T47898"/>
</dbReference>
<dbReference type="RefSeq" id="NP_191646.1">
    <property type="nucleotide sequence ID" value="NM_115951.2"/>
</dbReference>
<dbReference type="SMR" id="Q9LZX7"/>
<dbReference type="STRING" id="3702.Q9LZX7"/>
<dbReference type="PaxDb" id="3702-AT3G60870.1"/>
<dbReference type="ProteomicsDB" id="244966"/>
<dbReference type="EnsemblPlants" id="AT3G60870.1">
    <property type="protein sequence ID" value="AT3G60870.1"/>
    <property type="gene ID" value="AT3G60870"/>
</dbReference>
<dbReference type="GeneID" id="825258"/>
<dbReference type="Gramene" id="AT3G60870.1">
    <property type="protein sequence ID" value="AT3G60870.1"/>
    <property type="gene ID" value="AT3G60870"/>
</dbReference>
<dbReference type="KEGG" id="ath:AT3G60870"/>
<dbReference type="Araport" id="AT3G60870"/>
<dbReference type="TAIR" id="AT3G60870">
    <property type="gene designation" value="AHL18"/>
</dbReference>
<dbReference type="eggNOG" id="ENOG502QRBV">
    <property type="taxonomic scope" value="Eukaryota"/>
</dbReference>
<dbReference type="HOGENOM" id="CLU_039808_2_0_1"/>
<dbReference type="InParanoid" id="Q9LZX7"/>
<dbReference type="OMA" id="GCDIMET"/>
<dbReference type="PhylomeDB" id="Q9LZX7"/>
<dbReference type="PRO" id="PR:Q9LZX7"/>
<dbReference type="Proteomes" id="UP000006548">
    <property type="component" value="Chromosome 3"/>
</dbReference>
<dbReference type="ExpressionAtlas" id="Q9LZX7">
    <property type="expression patterns" value="baseline and differential"/>
</dbReference>
<dbReference type="GO" id="GO:0005634">
    <property type="term" value="C:nucleus"/>
    <property type="evidence" value="ECO:0000314"/>
    <property type="project" value="TAIR"/>
</dbReference>
<dbReference type="GO" id="GO:0003680">
    <property type="term" value="F:minor groove of adenine-thymine-rich DNA binding"/>
    <property type="evidence" value="ECO:0007669"/>
    <property type="project" value="InterPro"/>
</dbReference>
<dbReference type="GO" id="GO:0009908">
    <property type="term" value="P:flower development"/>
    <property type="evidence" value="ECO:0007669"/>
    <property type="project" value="UniProtKB-KW"/>
</dbReference>
<dbReference type="GO" id="GO:0048364">
    <property type="term" value="P:root development"/>
    <property type="evidence" value="ECO:0000315"/>
    <property type="project" value="TAIR"/>
</dbReference>
<dbReference type="GO" id="GO:0010228">
    <property type="term" value="P:vegetative to reproductive phase transition of meristem"/>
    <property type="evidence" value="ECO:0000315"/>
    <property type="project" value="TAIR"/>
</dbReference>
<dbReference type="CDD" id="cd11378">
    <property type="entry name" value="DUF296"/>
    <property type="match status" value="1"/>
</dbReference>
<dbReference type="FunFam" id="3.30.1330.80:FF:000001">
    <property type="entry name" value="AT-hook motif nuclear-localized protein"/>
    <property type="match status" value="1"/>
</dbReference>
<dbReference type="Gene3D" id="3.30.1330.80">
    <property type="entry name" value="Hypothetical protein, similar to alpha- acetolactate decarboxylase, domain 2"/>
    <property type="match status" value="1"/>
</dbReference>
<dbReference type="InterPro" id="IPR014476">
    <property type="entry name" value="AHL15-29"/>
</dbReference>
<dbReference type="InterPro" id="IPR005175">
    <property type="entry name" value="PPC_dom"/>
</dbReference>
<dbReference type="PANTHER" id="PTHR31100">
    <property type="entry name" value="AT-HOOK MOTIF NUCLEAR-LOCALIZED PROTEIN 15"/>
    <property type="match status" value="1"/>
</dbReference>
<dbReference type="PANTHER" id="PTHR31100:SF2">
    <property type="entry name" value="AT-HOOK MOTIF NUCLEAR-LOCALIZED PROTEIN 18-RELATED"/>
    <property type="match status" value="1"/>
</dbReference>
<dbReference type="Pfam" id="PF03479">
    <property type="entry name" value="PCC"/>
    <property type="match status" value="1"/>
</dbReference>
<dbReference type="PIRSF" id="PIRSF016021">
    <property type="entry name" value="ESCAROLA"/>
    <property type="match status" value="1"/>
</dbReference>
<dbReference type="SUPFAM" id="SSF117856">
    <property type="entry name" value="AF0104/ALDC/Ptd012-like"/>
    <property type="match status" value="1"/>
</dbReference>
<dbReference type="PROSITE" id="PS51742">
    <property type="entry name" value="PPC"/>
    <property type="match status" value="1"/>
</dbReference>
<proteinExistence type="evidence at transcript level"/>
<reference key="1">
    <citation type="journal article" date="2000" name="Nature">
        <title>Sequence and analysis of chromosome 3 of the plant Arabidopsis thaliana.</title>
        <authorList>
            <person name="Salanoubat M."/>
            <person name="Lemcke K."/>
            <person name="Rieger M."/>
            <person name="Ansorge W."/>
            <person name="Unseld M."/>
            <person name="Fartmann B."/>
            <person name="Valle G."/>
            <person name="Bloecker H."/>
            <person name="Perez-Alonso M."/>
            <person name="Obermaier B."/>
            <person name="Delseny M."/>
            <person name="Boutry M."/>
            <person name="Grivell L.A."/>
            <person name="Mache R."/>
            <person name="Puigdomenech P."/>
            <person name="De Simone V."/>
            <person name="Choisne N."/>
            <person name="Artiguenave F."/>
            <person name="Robert C."/>
            <person name="Brottier P."/>
            <person name="Wincker P."/>
            <person name="Cattolico L."/>
            <person name="Weissenbach J."/>
            <person name="Saurin W."/>
            <person name="Quetier F."/>
            <person name="Schaefer M."/>
            <person name="Mueller-Auer S."/>
            <person name="Gabel C."/>
            <person name="Fuchs M."/>
            <person name="Benes V."/>
            <person name="Wurmbach E."/>
            <person name="Drzonek H."/>
            <person name="Erfle H."/>
            <person name="Jordan N."/>
            <person name="Bangert S."/>
            <person name="Wiedelmann R."/>
            <person name="Kranz H."/>
            <person name="Voss H."/>
            <person name="Holland R."/>
            <person name="Brandt P."/>
            <person name="Nyakatura G."/>
            <person name="Vezzi A."/>
            <person name="D'Angelo M."/>
            <person name="Pallavicini A."/>
            <person name="Toppo S."/>
            <person name="Simionati B."/>
            <person name="Conrad A."/>
            <person name="Hornischer K."/>
            <person name="Kauer G."/>
            <person name="Loehnert T.-H."/>
            <person name="Nordsiek G."/>
            <person name="Reichelt J."/>
            <person name="Scharfe M."/>
            <person name="Schoen O."/>
            <person name="Bargues M."/>
            <person name="Terol J."/>
            <person name="Climent J."/>
            <person name="Navarro P."/>
            <person name="Collado C."/>
            <person name="Perez-Perez A."/>
            <person name="Ottenwaelder B."/>
            <person name="Duchemin D."/>
            <person name="Cooke R."/>
            <person name="Laudie M."/>
            <person name="Berger-Llauro C."/>
            <person name="Purnelle B."/>
            <person name="Masuy D."/>
            <person name="de Haan M."/>
            <person name="Maarse A.C."/>
            <person name="Alcaraz J.-P."/>
            <person name="Cottet A."/>
            <person name="Casacuberta E."/>
            <person name="Monfort A."/>
            <person name="Argiriou A."/>
            <person name="Flores M."/>
            <person name="Liguori R."/>
            <person name="Vitale D."/>
            <person name="Mannhaupt G."/>
            <person name="Haase D."/>
            <person name="Schoof H."/>
            <person name="Rudd S."/>
            <person name="Zaccaria P."/>
            <person name="Mewes H.-W."/>
            <person name="Mayer K.F.X."/>
            <person name="Kaul S."/>
            <person name="Town C.D."/>
            <person name="Koo H.L."/>
            <person name="Tallon L.J."/>
            <person name="Jenkins J."/>
            <person name="Rooney T."/>
            <person name="Rizzo M."/>
            <person name="Walts A."/>
            <person name="Utterback T."/>
            <person name="Fujii C.Y."/>
            <person name="Shea T.P."/>
            <person name="Creasy T.H."/>
            <person name="Haas B."/>
            <person name="Maiti R."/>
            <person name="Wu D."/>
            <person name="Peterson J."/>
            <person name="Van Aken S."/>
            <person name="Pai G."/>
            <person name="Militscher J."/>
            <person name="Sellers P."/>
            <person name="Gill J.E."/>
            <person name="Feldblyum T.V."/>
            <person name="Preuss D."/>
            <person name="Lin X."/>
            <person name="Nierman W.C."/>
            <person name="Salzberg S.L."/>
            <person name="White O."/>
            <person name="Venter J.C."/>
            <person name="Fraser C.M."/>
            <person name="Kaneko T."/>
            <person name="Nakamura Y."/>
            <person name="Sato S."/>
            <person name="Kato T."/>
            <person name="Asamizu E."/>
            <person name="Sasamoto S."/>
            <person name="Kimura T."/>
            <person name="Idesawa K."/>
            <person name="Kawashima K."/>
            <person name="Kishida Y."/>
            <person name="Kiyokawa C."/>
            <person name="Kohara M."/>
            <person name="Matsumoto M."/>
            <person name="Matsuno A."/>
            <person name="Muraki A."/>
            <person name="Nakayama S."/>
            <person name="Nakazaki N."/>
            <person name="Shinpo S."/>
            <person name="Takeuchi C."/>
            <person name="Wada T."/>
            <person name="Watanabe A."/>
            <person name="Yamada M."/>
            <person name="Yasuda M."/>
            <person name="Tabata S."/>
        </authorList>
    </citation>
    <scope>NUCLEOTIDE SEQUENCE [LARGE SCALE GENOMIC DNA]</scope>
    <source>
        <strain>cv. Columbia</strain>
    </source>
</reference>
<reference key="2">
    <citation type="journal article" date="2017" name="Plant J.">
        <title>Araport11: a complete reannotation of the Arabidopsis thaliana reference genome.</title>
        <authorList>
            <person name="Cheng C.Y."/>
            <person name="Krishnakumar V."/>
            <person name="Chan A.P."/>
            <person name="Thibaud-Nissen F."/>
            <person name="Schobel S."/>
            <person name="Town C.D."/>
        </authorList>
    </citation>
    <scope>GENOME REANNOTATION</scope>
    <source>
        <strain>cv. Columbia</strain>
    </source>
</reference>
<reference key="3">
    <citation type="journal article" date="2004" name="Plant Mol. Biol.">
        <title>Identification of a novel plant MAR DNA binding protein localized on chromosomal surfaces.</title>
        <authorList>
            <person name="Fujimoto S."/>
            <person name="Matsunaga S."/>
            <person name="Yonemura M."/>
            <person name="Uchiyama S."/>
            <person name="Azuma T."/>
            <person name="Fukui K."/>
        </authorList>
    </citation>
    <scope>IDENTIFICATION</scope>
    <scope>GENE FAMILY</scope>
    <scope>NOMENCLATURE</scope>
    <source>
        <strain>cv. Columbia</strain>
    </source>
</reference>
<reference key="4">
    <citation type="journal article" date="2009" name="Plant Mol. Biol.">
        <title>Over-expression of an AT-hook gene, AHL22, delays flowering and inhibits the elongation of the hypocotyl in Arabidopsis thaliana.</title>
        <authorList>
            <person name="Xiao C."/>
            <person name="Chen F."/>
            <person name="Yu X."/>
            <person name="Lin C."/>
            <person name="Fu Y.F."/>
        </authorList>
    </citation>
    <scope>FUNCTION</scope>
</reference>
<reference key="5">
    <citation type="journal article" date="2013" name="Proc. Natl. Acad. Sci. U.S.A.">
        <title>Arabidopsis thaliana AHL family modulates hypocotyl growth redundantly by interacting with each other via the PPC/DUF296 domain.</title>
        <authorList>
            <person name="Zhao J."/>
            <person name="Favero D.S."/>
            <person name="Peng H."/>
            <person name="Neff M.M."/>
        </authorList>
    </citation>
    <scope>GENE FAMILY</scope>
    <scope>DOMAIN PPC</scope>
</reference>